<gene>
    <name evidence="1" type="primary">hisH</name>
    <name type="ordered locus">PBPRA1088</name>
</gene>
<organism>
    <name type="scientific">Photobacterium profundum (strain SS9)</name>
    <dbReference type="NCBI Taxonomy" id="298386"/>
    <lineage>
        <taxon>Bacteria</taxon>
        <taxon>Pseudomonadati</taxon>
        <taxon>Pseudomonadota</taxon>
        <taxon>Gammaproteobacteria</taxon>
        <taxon>Vibrionales</taxon>
        <taxon>Vibrionaceae</taxon>
        <taxon>Photobacterium</taxon>
    </lineage>
</organism>
<comment type="function">
    <text evidence="1">IGPS catalyzes the conversion of PRFAR and glutamine to IGP, AICAR and glutamate. The HisH subunit catalyzes the hydrolysis of glutamine to glutamate and ammonia as part of the synthesis of IGP and AICAR. The resulting ammonia molecule is channeled to the active site of HisF.</text>
</comment>
<comment type="catalytic activity">
    <reaction evidence="1">
        <text>5-[(5-phospho-1-deoxy-D-ribulos-1-ylimino)methylamino]-1-(5-phospho-beta-D-ribosyl)imidazole-4-carboxamide + L-glutamine = D-erythro-1-(imidazol-4-yl)glycerol 3-phosphate + 5-amino-1-(5-phospho-beta-D-ribosyl)imidazole-4-carboxamide + L-glutamate + H(+)</text>
        <dbReference type="Rhea" id="RHEA:24793"/>
        <dbReference type="ChEBI" id="CHEBI:15378"/>
        <dbReference type="ChEBI" id="CHEBI:29985"/>
        <dbReference type="ChEBI" id="CHEBI:58278"/>
        <dbReference type="ChEBI" id="CHEBI:58359"/>
        <dbReference type="ChEBI" id="CHEBI:58475"/>
        <dbReference type="ChEBI" id="CHEBI:58525"/>
        <dbReference type="EC" id="4.3.2.10"/>
    </reaction>
</comment>
<comment type="catalytic activity">
    <reaction evidence="1">
        <text>L-glutamine + H2O = L-glutamate + NH4(+)</text>
        <dbReference type="Rhea" id="RHEA:15889"/>
        <dbReference type="ChEBI" id="CHEBI:15377"/>
        <dbReference type="ChEBI" id="CHEBI:28938"/>
        <dbReference type="ChEBI" id="CHEBI:29985"/>
        <dbReference type="ChEBI" id="CHEBI:58359"/>
        <dbReference type="EC" id="3.5.1.2"/>
    </reaction>
</comment>
<comment type="pathway">
    <text evidence="1">Amino-acid biosynthesis; L-histidine biosynthesis; L-histidine from 5-phospho-alpha-D-ribose 1-diphosphate: step 5/9.</text>
</comment>
<comment type="subunit">
    <text evidence="1">Heterodimer of HisH and HisF.</text>
</comment>
<comment type="subcellular location">
    <subcellularLocation>
        <location evidence="1">Cytoplasm</location>
    </subcellularLocation>
</comment>
<keyword id="KW-0028">Amino-acid biosynthesis</keyword>
<keyword id="KW-0963">Cytoplasm</keyword>
<keyword id="KW-0315">Glutamine amidotransferase</keyword>
<keyword id="KW-0368">Histidine biosynthesis</keyword>
<keyword id="KW-0378">Hydrolase</keyword>
<keyword id="KW-0456">Lyase</keyword>
<keyword id="KW-1185">Reference proteome</keyword>
<feature type="chain" id="PRO_0000152403" description="Imidazole glycerol phosphate synthase subunit HisH">
    <location>
        <begin position="1"/>
        <end position="210"/>
    </location>
</feature>
<feature type="domain" description="Glutamine amidotransferase type-1" evidence="1">
    <location>
        <begin position="7"/>
        <end position="210"/>
    </location>
</feature>
<feature type="active site" description="Nucleophile" evidence="1">
    <location>
        <position position="82"/>
    </location>
</feature>
<feature type="active site" evidence="1">
    <location>
        <position position="192"/>
    </location>
</feature>
<feature type="active site" evidence="1">
    <location>
        <position position="194"/>
    </location>
</feature>
<proteinExistence type="inferred from homology"/>
<evidence type="ECO:0000255" key="1">
    <source>
        <dbReference type="HAMAP-Rule" id="MF_00278"/>
    </source>
</evidence>
<accession>P62448</accession>
<protein>
    <recommendedName>
        <fullName evidence="1">Imidazole glycerol phosphate synthase subunit HisH</fullName>
        <ecNumber evidence="1">4.3.2.10</ecNumber>
    </recommendedName>
    <alternativeName>
        <fullName evidence="1">IGP synthase glutaminase subunit</fullName>
        <ecNumber evidence="1">3.5.1.2</ecNumber>
    </alternativeName>
    <alternativeName>
        <fullName evidence="1">IGP synthase subunit HisH</fullName>
    </alternativeName>
    <alternativeName>
        <fullName evidence="1">ImGP synthase subunit HisH</fullName>
        <shortName evidence="1">IGPS subunit HisH</shortName>
    </alternativeName>
</protein>
<reference key="1">
    <citation type="journal article" date="2005" name="Science">
        <title>Life at depth: Photobacterium profundum genome sequence and expression analysis.</title>
        <authorList>
            <person name="Vezzi A."/>
            <person name="Campanaro S."/>
            <person name="D'Angelo M."/>
            <person name="Simonato F."/>
            <person name="Vitulo N."/>
            <person name="Lauro F.M."/>
            <person name="Cestaro A."/>
            <person name="Malacrida G."/>
            <person name="Simionati B."/>
            <person name="Cannata N."/>
            <person name="Romualdi C."/>
            <person name="Bartlett D.H."/>
            <person name="Valle G."/>
        </authorList>
    </citation>
    <scope>NUCLEOTIDE SEQUENCE [LARGE SCALE GENOMIC DNA]</scope>
    <source>
        <strain>ATCC BAA-1253 / SS9</strain>
    </source>
</reference>
<name>HIS5_PHOPR</name>
<sequence length="210" mass="22896">MASTNQKVVIIDTGCANVSSVRFAIERLGYTVTISKETSVVLNADKLFLPGVGTASEAMKNLQERDLVELVKQVDKPLLGICLGMQLLGALSEEQGQNGKELVPCLHLCDAPIKKLKTGNLPLPHMGWNTITPIDNHPLFQGIPAGSYFYFVHSYAMPVSTGVNDYTIAQCEYGQPFSAAIQSGNYYGVQFHPERSSKAGSQLIKNFLEM</sequence>
<dbReference type="EC" id="4.3.2.10" evidence="1"/>
<dbReference type="EC" id="3.5.1.2" evidence="1"/>
<dbReference type="EMBL" id="CR378666">
    <property type="protein sequence ID" value="CAG19499.1"/>
    <property type="molecule type" value="Genomic_DNA"/>
</dbReference>
<dbReference type="RefSeq" id="WP_011217832.1">
    <property type="nucleotide sequence ID" value="NC_006370.1"/>
</dbReference>
<dbReference type="SMR" id="P62448"/>
<dbReference type="STRING" id="298386.PBPRA1088"/>
<dbReference type="MEROPS" id="C26.965"/>
<dbReference type="KEGG" id="ppr:PBPRA1088"/>
<dbReference type="eggNOG" id="COG0118">
    <property type="taxonomic scope" value="Bacteria"/>
</dbReference>
<dbReference type="HOGENOM" id="CLU_071837_0_0_6"/>
<dbReference type="UniPathway" id="UPA00031">
    <property type="reaction ID" value="UER00010"/>
</dbReference>
<dbReference type="Proteomes" id="UP000000593">
    <property type="component" value="Chromosome 1"/>
</dbReference>
<dbReference type="GO" id="GO:0005737">
    <property type="term" value="C:cytoplasm"/>
    <property type="evidence" value="ECO:0007669"/>
    <property type="project" value="UniProtKB-SubCell"/>
</dbReference>
<dbReference type="GO" id="GO:0004359">
    <property type="term" value="F:glutaminase activity"/>
    <property type="evidence" value="ECO:0007669"/>
    <property type="project" value="UniProtKB-EC"/>
</dbReference>
<dbReference type="GO" id="GO:0000107">
    <property type="term" value="F:imidazoleglycerol-phosphate synthase activity"/>
    <property type="evidence" value="ECO:0007669"/>
    <property type="project" value="UniProtKB-UniRule"/>
</dbReference>
<dbReference type="GO" id="GO:0016829">
    <property type="term" value="F:lyase activity"/>
    <property type="evidence" value="ECO:0007669"/>
    <property type="project" value="UniProtKB-KW"/>
</dbReference>
<dbReference type="GO" id="GO:0000105">
    <property type="term" value="P:L-histidine biosynthetic process"/>
    <property type="evidence" value="ECO:0007669"/>
    <property type="project" value="UniProtKB-UniRule"/>
</dbReference>
<dbReference type="CDD" id="cd01748">
    <property type="entry name" value="GATase1_IGP_Synthase"/>
    <property type="match status" value="1"/>
</dbReference>
<dbReference type="FunFam" id="3.40.50.880:FF:000009">
    <property type="entry name" value="Imidazole glycerol phosphate synthase subunit HisH"/>
    <property type="match status" value="1"/>
</dbReference>
<dbReference type="Gene3D" id="3.40.50.880">
    <property type="match status" value="1"/>
</dbReference>
<dbReference type="HAMAP" id="MF_00278">
    <property type="entry name" value="HisH"/>
    <property type="match status" value="1"/>
</dbReference>
<dbReference type="InterPro" id="IPR029062">
    <property type="entry name" value="Class_I_gatase-like"/>
</dbReference>
<dbReference type="InterPro" id="IPR017926">
    <property type="entry name" value="GATASE"/>
</dbReference>
<dbReference type="InterPro" id="IPR010139">
    <property type="entry name" value="Imidazole-glycPsynth_HisH"/>
</dbReference>
<dbReference type="NCBIfam" id="TIGR01855">
    <property type="entry name" value="IMP_synth_hisH"/>
    <property type="match status" value="1"/>
</dbReference>
<dbReference type="PANTHER" id="PTHR42701">
    <property type="entry name" value="IMIDAZOLE GLYCEROL PHOSPHATE SYNTHASE SUBUNIT HISH"/>
    <property type="match status" value="1"/>
</dbReference>
<dbReference type="PANTHER" id="PTHR42701:SF1">
    <property type="entry name" value="IMIDAZOLE GLYCEROL PHOSPHATE SYNTHASE SUBUNIT HISH"/>
    <property type="match status" value="1"/>
</dbReference>
<dbReference type="Pfam" id="PF00117">
    <property type="entry name" value="GATase"/>
    <property type="match status" value="1"/>
</dbReference>
<dbReference type="PIRSF" id="PIRSF000495">
    <property type="entry name" value="Amidotransf_hisH"/>
    <property type="match status" value="1"/>
</dbReference>
<dbReference type="SUPFAM" id="SSF52317">
    <property type="entry name" value="Class I glutamine amidotransferase-like"/>
    <property type="match status" value="1"/>
</dbReference>
<dbReference type="PROSITE" id="PS51273">
    <property type="entry name" value="GATASE_TYPE_1"/>
    <property type="match status" value="1"/>
</dbReference>